<comment type="catalytic activity">
    <reaction>
        <text>nitric oxide + Fe(III)-[cytochrome c] + H2O = Fe(II)-[cytochrome c] + nitrite + 2 H(+)</text>
        <dbReference type="Rhea" id="RHEA:15233"/>
        <dbReference type="Rhea" id="RHEA-COMP:10350"/>
        <dbReference type="Rhea" id="RHEA-COMP:14399"/>
        <dbReference type="ChEBI" id="CHEBI:15377"/>
        <dbReference type="ChEBI" id="CHEBI:15378"/>
        <dbReference type="ChEBI" id="CHEBI:16301"/>
        <dbReference type="ChEBI" id="CHEBI:16480"/>
        <dbReference type="ChEBI" id="CHEBI:29033"/>
        <dbReference type="ChEBI" id="CHEBI:29034"/>
        <dbReference type="EC" id="1.7.2.1"/>
    </reaction>
</comment>
<comment type="catalytic activity">
    <reaction>
        <text>A + NH4(+) + H2O = hydroxylamine + AH2 + H(+)</text>
        <dbReference type="Rhea" id="RHEA:22052"/>
        <dbReference type="ChEBI" id="CHEBI:13193"/>
        <dbReference type="ChEBI" id="CHEBI:15377"/>
        <dbReference type="ChEBI" id="CHEBI:15378"/>
        <dbReference type="ChEBI" id="CHEBI:15429"/>
        <dbReference type="ChEBI" id="CHEBI:17499"/>
        <dbReference type="ChEBI" id="CHEBI:28938"/>
        <dbReference type="EC" id="1.7.99.1"/>
    </reaction>
</comment>
<comment type="cofactor">
    <cofactor evidence="1">
        <name>heme c</name>
        <dbReference type="ChEBI" id="CHEBI:61717"/>
    </cofactor>
    <text evidence="1">Binds 1 heme c group covalently per subunit.</text>
</comment>
<comment type="cofactor">
    <cofactor evidence="1">
        <name>heme</name>
        <dbReference type="ChEBI" id="CHEBI:30413"/>
    </cofactor>
    <text evidence="1">Binds 1 heme d1 group per subunit.</text>
</comment>
<comment type="subunit">
    <text>Homodimer in solution.</text>
</comment>
<comment type="subcellular location">
    <subcellularLocation>
        <location>Periplasm</location>
    </subcellularLocation>
</comment>
<comment type="induction">
    <text>By anaerobic conditions. Induced by nitrite, repressed by nitrate, and inhibited by oxygen.</text>
</comment>
<feature type="signal peptide">
    <location>
        <begin position="1"/>
        <end position="26"/>
    </location>
</feature>
<feature type="chain" id="PRO_0000006577" description="Nitrite reductase">
    <location>
        <begin position="27"/>
        <end position="560"/>
    </location>
</feature>
<feature type="domain" description="Cytochrome c" evidence="2">
    <location>
        <begin position="30"/>
        <end position="126"/>
    </location>
</feature>
<feature type="region of interest" description="N-terminal tail">
    <location>
        <begin position="27"/>
        <end position="29"/>
    </location>
</feature>
<feature type="region of interest" description="Disordered" evidence="3">
    <location>
        <begin position="61"/>
        <end position="80"/>
    </location>
</feature>
<feature type="region of interest" description="D1-heme domain">
    <location>
        <begin position="127"/>
        <end position="560"/>
    </location>
</feature>
<feature type="compositionally biased region" description="Basic and acidic residues" evidence="3">
    <location>
        <begin position="63"/>
        <end position="78"/>
    </location>
</feature>
<feature type="binding site" description="covalent" evidence="1">
    <location>
        <position position="47"/>
    </location>
    <ligand>
        <name>heme c</name>
        <dbReference type="ChEBI" id="CHEBI:61717"/>
    </ligand>
</feature>
<feature type="binding site" description="covalent" evidence="1">
    <location>
        <position position="50"/>
    </location>
    <ligand>
        <name>heme c</name>
        <dbReference type="ChEBI" id="CHEBI:61717"/>
    </ligand>
</feature>
<feature type="binding site" description="axial binding residue" evidence="1">
    <location>
        <position position="51"/>
    </location>
    <ligand>
        <name>heme c</name>
        <dbReference type="ChEBI" id="CHEBI:61717"/>
    </ligand>
    <ligandPart>
        <name>Fe</name>
        <dbReference type="ChEBI" id="CHEBI:18248"/>
    </ligandPart>
</feature>
<feature type="binding site" evidence="1">
    <location>
        <position position="97"/>
    </location>
    <ligand>
        <name>heme c</name>
        <dbReference type="ChEBI" id="CHEBI:61717"/>
    </ligand>
</feature>
<feature type="binding site" description="axial binding residue" evidence="1">
    <location>
        <position position="101"/>
    </location>
    <ligand>
        <name>heme c</name>
        <dbReference type="ChEBI" id="CHEBI:61717"/>
    </ligand>
    <ligandPart>
        <name>Fe</name>
        <dbReference type="ChEBI" id="CHEBI:18248"/>
    </ligandPart>
</feature>
<feature type="binding site" description="proximal binding residue" evidence="1">
    <location>
        <position position="193"/>
    </location>
    <ligand>
        <name>heme d1</name>
        <dbReference type="ChEBI" id="CHEBI:60549"/>
    </ligand>
    <ligandPart>
        <name>Fe</name>
        <dbReference type="ChEBI" id="CHEBI:18248"/>
    </ligandPart>
</feature>
<feature type="binding site" evidence="1">
    <location>
        <position position="236"/>
    </location>
    <ligand>
        <name>heme d1</name>
        <dbReference type="ChEBI" id="CHEBI:60549"/>
    </ligand>
</feature>
<feature type="binding site" evidence="1">
    <location>
        <position position="237"/>
    </location>
    <ligand>
        <name>heme d1</name>
        <dbReference type="ChEBI" id="CHEBI:60549"/>
    </ligand>
</feature>
<feature type="binding site" evidence="1">
    <location>
        <position position="256"/>
    </location>
    <ligand>
        <name>heme d1</name>
        <dbReference type="ChEBI" id="CHEBI:60549"/>
    </ligand>
</feature>
<feature type="binding site" evidence="1">
    <location>
        <position position="382"/>
    </location>
    <ligand>
        <name>heme d1</name>
        <dbReference type="ChEBI" id="CHEBI:60549"/>
    </ligand>
</feature>
<feature type="binding site" evidence="1">
    <location>
        <position position="500"/>
    </location>
    <ligand>
        <name>heme d1</name>
        <dbReference type="ChEBI" id="CHEBI:60549"/>
    </ligand>
</feature>
<gene>
    <name type="primary">nirS</name>
</gene>
<accession>P24040</accession>
<keyword id="KW-0903">Direct protein sequencing</keyword>
<keyword id="KW-0249">Electron transport</keyword>
<keyword id="KW-0349">Heme</keyword>
<keyword id="KW-0408">Iron</keyword>
<keyword id="KW-0479">Metal-binding</keyword>
<keyword id="KW-0560">Oxidoreductase</keyword>
<keyword id="KW-0574">Periplasm</keyword>
<keyword id="KW-0732">Signal</keyword>
<keyword id="KW-0813">Transport</keyword>
<name>NIRS_STUST</name>
<protein>
    <recommendedName>
        <fullName>Nitrite reductase</fullName>
        <ecNumber>1.7.2.1</ecNumber>
    </recommendedName>
    <alternativeName>
        <fullName>Cytochrome cd1</fullName>
    </alternativeName>
    <alternativeName>
        <fullName>Cytochrome oxidase</fullName>
    </alternativeName>
    <alternativeName>
        <fullName>Hydroxylamine reductase</fullName>
        <ecNumber>1.7.99.1</ecNumber>
    </alternativeName>
</protein>
<evidence type="ECO:0000250" key="1">
    <source>
        <dbReference type="UniProtKB" id="P24474"/>
    </source>
</evidence>
<evidence type="ECO:0000255" key="2">
    <source>
        <dbReference type="PROSITE-ProRule" id="PRU00433"/>
    </source>
</evidence>
<evidence type="ECO:0000256" key="3">
    <source>
        <dbReference type="SAM" id="MobiDB-lite"/>
    </source>
</evidence>
<organism>
    <name type="scientific">Stutzerimonas stutzeri</name>
    <name type="common">Pseudomonas stutzeri</name>
    <dbReference type="NCBI Taxonomy" id="316"/>
    <lineage>
        <taxon>Bacteria</taxon>
        <taxon>Pseudomonadati</taxon>
        <taxon>Pseudomonadota</taxon>
        <taxon>Gammaproteobacteria</taxon>
        <taxon>Pseudomonadales</taxon>
        <taxon>Pseudomonadaceae</taxon>
        <taxon>Stutzerimonas</taxon>
    </lineage>
</organism>
<proteinExistence type="evidence at protein level"/>
<reference key="1">
    <citation type="journal article" date="1991" name="FEBS Lett.">
        <title>The nirSTBM region coding for cytochrome cd1-dependent nitrite respiration of Pseudomonas stutzeri consists of a cluster of mono-, di-, and tetraheme proteins.</title>
        <authorList>
            <person name="Juengst A."/>
            <person name="Wakabayashi S."/>
            <person name="Matsubara H."/>
            <person name="Zumft W.G."/>
        </authorList>
    </citation>
    <scope>NUCLEOTIDE SEQUENCE [GENOMIC DNA]</scope>
    <scope>PARTIAL PROTEIN SEQUENCE</scope>
    <source>
        <strain>ATCC 14405 / JCM 20778 / CIP 107696 / IAM 12931 / LMG 2243 / NCIMB 568 / Baumann 218 / ZoBell 632</strain>
    </source>
</reference>
<dbReference type="EC" id="1.7.2.1"/>
<dbReference type="EC" id="1.7.99.1"/>
<dbReference type="EMBL" id="X53676">
    <property type="protein sequence ID" value="CAA40150.1"/>
    <property type="molecule type" value="Genomic_DNA"/>
</dbReference>
<dbReference type="PIR" id="S13613">
    <property type="entry name" value="OSPSZ"/>
</dbReference>
<dbReference type="RefSeq" id="WP_003279945.1">
    <property type="nucleotide sequence ID" value="NZ_CP152340.1"/>
</dbReference>
<dbReference type="SMR" id="P24040"/>
<dbReference type="KEGG" id="ag:CAA40150"/>
<dbReference type="eggNOG" id="COG2010">
    <property type="taxonomic scope" value="Bacteria"/>
</dbReference>
<dbReference type="BioCyc" id="MetaCyc:MONOMER-201"/>
<dbReference type="BRENDA" id="1.7.2.1">
    <property type="organism ID" value="5158"/>
</dbReference>
<dbReference type="GO" id="GO:0042597">
    <property type="term" value="C:periplasmic space"/>
    <property type="evidence" value="ECO:0007669"/>
    <property type="project" value="UniProtKB-SubCell"/>
</dbReference>
<dbReference type="GO" id="GO:0009055">
    <property type="term" value="F:electron transfer activity"/>
    <property type="evidence" value="ECO:0007669"/>
    <property type="project" value="InterPro"/>
</dbReference>
<dbReference type="GO" id="GO:0020037">
    <property type="term" value="F:heme binding"/>
    <property type="evidence" value="ECO:0007669"/>
    <property type="project" value="InterPro"/>
</dbReference>
<dbReference type="GO" id="GO:0050418">
    <property type="term" value="F:hydroxylamine reductase activity"/>
    <property type="evidence" value="ECO:0007669"/>
    <property type="project" value="UniProtKB-EC"/>
</dbReference>
<dbReference type="GO" id="GO:0046872">
    <property type="term" value="F:metal ion binding"/>
    <property type="evidence" value="ECO:0007669"/>
    <property type="project" value="UniProtKB-KW"/>
</dbReference>
<dbReference type="GO" id="GO:0050421">
    <property type="term" value="F:nitrite reductase (NO-forming) activity"/>
    <property type="evidence" value="ECO:0007669"/>
    <property type="project" value="UniProtKB-EC"/>
</dbReference>
<dbReference type="CDD" id="cd20779">
    <property type="entry name" value="8prop_hemeD1_NirS"/>
    <property type="match status" value="1"/>
</dbReference>
<dbReference type="Gene3D" id="2.140.10.20">
    <property type="entry name" value="C-terminal (heme d1) domain of cytochrome cd1-nitrite reductase"/>
    <property type="match status" value="1"/>
</dbReference>
<dbReference type="Gene3D" id="1.10.760.10">
    <property type="entry name" value="Cytochrome c-like domain"/>
    <property type="match status" value="1"/>
</dbReference>
<dbReference type="InterPro" id="IPR009056">
    <property type="entry name" value="Cyt_c-like_dom"/>
</dbReference>
<dbReference type="InterPro" id="IPR036909">
    <property type="entry name" value="Cyt_c-like_dom_sf"/>
</dbReference>
<dbReference type="InterPro" id="IPR003143">
    <property type="entry name" value="Cyt_cd1_C_sf"/>
</dbReference>
<dbReference type="InterPro" id="IPR011048">
    <property type="entry name" value="Haem_d1_sf"/>
</dbReference>
<dbReference type="Pfam" id="PF02239">
    <property type="entry name" value="Cytochrom_D1"/>
    <property type="match status" value="1"/>
</dbReference>
<dbReference type="Pfam" id="PF13442">
    <property type="entry name" value="Cytochrome_CBB3"/>
    <property type="match status" value="1"/>
</dbReference>
<dbReference type="SUPFAM" id="SSF51004">
    <property type="entry name" value="C-terminal (heme d1) domain of cytochrome cd1-nitrite reductase"/>
    <property type="match status" value="1"/>
</dbReference>
<dbReference type="SUPFAM" id="SSF46626">
    <property type="entry name" value="Cytochrome c"/>
    <property type="match status" value="1"/>
</dbReference>
<dbReference type="PROSITE" id="PS51007">
    <property type="entry name" value="CYTC"/>
    <property type="match status" value="1"/>
</dbReference>
<sequence length="560" mass="61993">MSNVGKPILAGLIAGLSLLGLAVAQAAAPEMTAEEKEASKQIYFERCAGCHGVLRKGATGKNLEPHWSKTEADGKKTEGGTLNLGTKRLENIIAYGTEGGMVNYDDILTKEEINMMARYIQHTPDIPPEFSLQDMKDSWNLIVPVEKRVTKQMNKINLQNVFAVTLRDAGKLALIDGDTHKIWKVLESGYAVHISRMSASGRYVYTTGRDGLTTIIDLWPEEPMTVATVRFGSDMRSVDVSKFEGYEDKYLIGGTYWPPQYSIVDGLTLEPIKVVSTRGQTVDGEYHPEPRVASIVASHIKPEWVVNVKETGQIILVDYTDLKNLKTTTIESAKFLHDGGWDYSKRYFMVAANASNKVAAVDTKTGKLAALIDTAKIPHPGRGANFVHPQFGPVWSTGHLGDDVVSLISTPSEESKYAKYKEHNWKVVQELKMPGAGNLFVKTHPKSKHFWADAPMNPEREVAESVYVFDMNDLSKAPIQLNVAKDSGLPESKAIRRAVQPEYNKAGDEVWISLWGGKTDQSAIVIYDDKTLKLKRVITDPAVVTPTGKFNVFNTMNDVY</sequence>